<gene>
    <name type="ORF">ORF VI</name>
</gene>
<proteinExistence type="inferred from homology"/>
<accession>Q05651</accession>
<reference key="1">
    <citation type="journal article" date="1993" name="Virology">
        <title>Identification of domains within gene VI of cauliflower mosaic virus that influence systemic infection of Nicotiana bigelovii in a light-dependent manner.</title>
        <authorList>
            <person name="Wintermantel W.M."/>
            <person name="Anderson E.J."/>
            <person name="Schoelz J.E."/>
        </authorList>
    </citation>
    <scope>NUCLEOTIDE SEQUENCE [GENOMIC DNA]</scope>
</reference>
<organismHost>
    <name type="scientific">Arabidopsis thaliana</name>
    <name type="common">Mouse-ear cress</name>
    <dbReference type="NCBI Taxonomy" id="3702"/>
</organismHost>
<organismHost>
    <name type="scientific">Brassica</name>
    <dbReference type="NCBI Taxonomy" id="3705"/>
</organismHost>
<organismHost>
    <name type="scientific">Raphanus</name>
    <dbReference type="NCBI Taxonomy" id="3725"/>
</organismHost>
<evidence type="ECO:0000250" key="1">
    <source>
        <dbReference type="UniProtKB" id="P03558"/>
    </source>
</evidence>
<evidence type="ECO:0000256" key="2">
    <source>
        <dbReference type="SAM" id="MobiDB-lite"/>
    </source>
</evidence>
<evidence type="ECO:0000305" key="3"/>
<sequence length="520" mass="57977">MENIEKLLMQEKILMLELDLVRAKISLARANGSSQQGDLPLHRETPVKEEAVHSALATFTPSQVKAIPEQTAPGKESTNPLMASILPKDMNPVQTGMRLTVPGDFLRPHQGIPIPRKSELSSTVAPLRAESGIQHPHINYYVVYNGPHAGIYDDWGCTKAATNGVPGVAHKKFATITEARAAADAYTTSQQTDRLNFIPKGEAQLKPKSFAKALTSPPKQKAHWLTLGTKKPSSDPAPKEISFDPEITMDDFLYLYDLVRKFDGEGDDTMFTTDNEKISLFNFRKNANPQMVREAYAAGLIKTIYPSNNLQEIKYLPKKVKDAVKRFRTNCIKNTEKDIFLKIRSTIPVWTIQGLLHKPRQVIEIGVSKKLVPTESKAMESKIQIEDLTELAVKTGEQFIQSLLRLNDKKKIFVNMVEHDTLIYSKNIKETVSEDQRAIETFQQRVISGNLLGFHCPAICHFIVKIVEKEGGTYQCHHCDKGKAIVKDASADSGPKDGPPPTRSIVEKEDVPTTSSKQVD</sequence>
<feature type="chain" id="PRO_0000222046" description="Transactivator/viroplasmin protein">
    <location>
        <begin position="1"/>
        <end position="520"/>
    </location>
</feature>
<feature type="region of interest" description="Disordered" evidence="2">
    <location>
        <begin position="487"/>
        <end position="520"/>
    </location>
</feature>
<name>IBMP_CAMVW</name>
<protein>
    <recommendedName>
        <fullName>Transactivator/viroplasmin protein</fullName>
        <shortName>Tav</shortName>
    </recommendedName>
    <alternativeName>
        <fullName>Inclusion body matrix protein</fullName>
    </alternativeName>
</protein>
<keyword id="KW-1035">Host cytoplasm</keyword>
<keyword id="KW-0810">Translation regulation</keyword>
<dbReference type="EMBL" id="L09053">
    <property type="protein sequence ID" value="AAA46360.1"/>
    <property type="molecule type" value="Genomic_DNA"/>
</dbReference>
<dbReference type="SMR" id="Q05651"/>
<dbReference type="GO" id="GO:0030430">
    <property type="term" value="C:host cell cytoplasm"/>
    <property type="evidence" value="ECO:0007669"/>
    <property type="project" value="UniProtKB-SubCell"/>
</dbReference>
<dbReference type="GO" id="GO:0006417">
    <property type="term" value="P:regulation of translation"/>
    <property type="evidence" value="ECO:0007669"/>
    <property type="project" value="UniProtKB-KW"/>
</dbReference>
<dbReference type="FunFam" id="3.40.970.10:FF:000003">
    <property type="entry name" value="Transactivator/viroplasmin protein"/>
    <property type="match status" value="1"/>
</dbReference>
<dbReference type="Gene3D" id="3.40.970.10">
    <property type="entry name" value="Ribonuclease H1, N-terminal domain"/>
    <property type="match status" value="1"/>
</dbReference>
<dbReference type="InterPro" id="IPR009027">
    <property type="entry name" value="Ribosomal_bL9/RNase_H1_N"/>
</dbReference>
<dbReference type="InterPro" id="IPR011320">
    <property type="entry name" value="RNase_H1_N"/>
</dbReference>
<dbReference type="InterPro" id="IPR037056">
    <property type="entry name" value="RNase_H1_N_sf"/>
</dbReference>
<dbReference type="Pfam" id="PF01693">
    <property type="entry name" value="Cauli_VI"/>
    <property type="match status" value="1"/>
</dbReference>
<dbReference type="SUPFAM" id="SSF55658">
    <property type="entry name" value="L9 N-domain-like"/>
    <property type="match status" value="1"/>
</dbReference>
<comment type="function">
    <text evidence="1">Enhances the ribosomal termination-reinitiation event leading to the translation of major open reading frames on the polycistronic viral RNAs.</text>
</comment>
<comment type="subcellular location">
    <subcellularLocation>
        <location>Host cytoplasm</location>
    </subcellularLocation>
    <text>Found in cytoplasmic occlusion bodies.</text>
</comment>
<comment type="miscellaneous">
    <text>The inclusion bodies are the site of viral DNA synthesis, virion assembly and accumulation in the infected cell.</text>
</comment>
<comment type="similarity">
    <text evidence="3">Belongs to the caulimoviridae viroplasmin family.</text>
</comment>
<organism>
    <name type="scientific">Cauliflower mosaic virus (strain W260)</name>
    <name type="common">CaMV</name>
    <dbReference type="NCBI Taxonomy" id="31558"/>
    <lineage>
        <taxon>Viruses</taxon>
        <taxon>Riboviria</taxon>
        <taxon>Pararnavirae</taxon>
        <taxon>Artverviricota</taxon>
        <taxon>Revtraviricetes</taxon>
        <taxon>Ortervirales</taxon>
        <taxon>Caulimoviridae</taxon>
        <taxon>Caulimovirus</taxon>
        <taxon>Caulimovirus tessellobrassicae</taxon>
    </lineage>
</organism>